<accession>Q9SW75</accession>
<proteinExistence type="evidence at transcript level"/>
<evidence type="ECO:0000305" key="1"/>
<feature type="chain" id="PRO_0000125835" description="Large ribosomal subunit protein uL1">
    <location>
        <begin position="1"/>
        <end position="213"/>
    </location>
</feature>
<reference key="1">
    <citation type="journal article" date="2000" name="Biochem. Biophys. Res. Commun.">
        <title>The oxidative stress-sensitive yap1 null strain of Saccharomyces cerevisiae becomes resistant due to increased carotenoid levels upon the introduction of the Chlamydomonas reinhardtii cDNA, coding for the 60S ribosomal protein L10a.</title>
        <authorList>
            <person name="Mendez-Alvarez S."/>
            <person name="Ruefenacht K."/>
            <person name="Eggen R.I.L."/>
        </authorList>
    </citation>
    <scope>NUCLEOTIDE SEQUENCE [MRNA]</scope>
</reference>
<organism>
    <name type="scientific">Chlamydomonas reinhardtii</name>
    <name type="common">Chlamydomonas smithii</name>
    <dbReference type="NCBI Taxonomy" id="3055"/>
    <lineage>
        <taxon>Eukaryota</taxon>
        <taxon>Viridiplantae</taxon>
        <taxon>Chlorophyta</taxon>
        <taxon>core chlorophytes</taxon>
        <taxon>Chlorophyceae</taxon>
        <taxon>CS clade</taxon>
        <taxon>Chlamydomonadales</taxon>
        <taxon>Chlamydomonadaceae</taxon>
        <taxon>Chlamydomonas</taxon>
    </lineage>
</organism>
<dbReference type="EMBL" id="AF175385">
    <property type="protein sequence ID" value="AAD50305.1"/>
    <property type="molecule type" value="mRNA"/>
</dbReference>
<dbReference type="SMR" id="Q9SW75"/>
<dbReference type="PaxDb" id="3055-EDP07503"/>
<dbReference type="ProMEX" id="Q9SW75"/>
<dbReference type="eggNOG" id="KOG1570">
    <property type="taxonomic scope" value="Eukaryota"/>
</dbReference>
<dbReference type="GO" id="GO:0015934">
    <property type="term" value="C:large ribosomal subunit"/>
    <property type="evidence" value="ECO:0007669"/>
    <property type="project" value="InterPro"/>
</dbReference>
<dbReference type="GO" id="GO:0003723">
    <property type="term" value="F:RNA binding"/>
    <property type="evidence" value="ECO:0007669"/>
    <property type="project" value="InterPro"/>
</dbReference>
<dbReference type="GO" id="GO:0003735">
    <property type="term" value="F:structural constituent of ribosome"/>
    <property type="evidence" value="ECO:0007669"/>
    <property type="project" value="InterPro"/>
</dbReference>
<dbReference type="GO" id="GO:0006412">
    <property type="term" value="P:translation"/>
    <property type="evidence" value="ECO:0007669"/>
    <property type="project" value="InterPro"/>
</dbReference>
<dbReference type="CDD" id="cd00403">
    <property type="entry name" value="Ribosomal_L1"/>
    <property type="match status" value="1"/>
</dbReference>
<dbReference type="FunFam" id="3.40.50.790:FF:000005">
    <property type="entry name" value="50S ribosomal protein L1"/>
    <property type="match status" value="1"/>
</dbReference>
<dbReference type="FunFam" id="3.30.190.20:FF:000006">
    <property type="entry name" value="Ribosomal protein"/>
    <property type="match status" value="1"/>
</dbReference>
<dbReference type="FunFam" id="3.30.190.20:FF:000009">
    <property type="entry name" value="Ribosomal protein L10a"/>
    <property type="match status" value="1"/>
</dbReference>
<dbReference type="Gene3D" id="3.30.190.20">
    <property type="match status" value="2"/>
</dbReference>
<dbReference type="InterPro" id="IPR050257">
    <property type="entry name" value="eL8/uL1-like"/>
</dbReference>
<dbReference type="InterPro" id="IPR002143">
    <property type="entry name" value="Ribosomal_uL1"/>
</dbReference>
<dbReference type="InterPro" id="IPR023674">
    <property type="entry name" value="Ribosomal_uL1-like"/>
</dbReference>
<dbReference type="InterPro" id="IPR028364">
    <property type="entry name" value="Ribosomal_uL1/biogenesis"/>
</dbReference>
<dbReference type="InterPro" id="IPR023673">
    <property type="entry name" value="Ribosomal_uL1_CS"/>
</dbReference>
<dbReference type="PANTHER" id="PTHR23105">
    <property type="entry name" value="RIBOSOMAL PROTEIN L7AE FAMILY MEMBER"/>
    <property type="match status" value="1"/>
</dbReference>
<dbReference type="Pfam" id="PF00687">
    <property type="entry name" value="Ribosomal_L1"/>
    <property type="match status" value="1"/>
</dbReference>
<dbReference type="PIRSF" id="PIRSF002155">
    <property type="entry name" value="Ribosomal_L1"/>
    <property type="match status" value="1"/>
</dbReference>
<dbReference type="SUPFAM" id="SSF56808">
    <property type="entry name" value="Ribosomal protein L1"/>
    <property type="match status" value="1"/>
</dbReference>
<dbReference type="PROSITE" id="PS01199">
    <property type="entry name" value="RIBOSOMAL_L1"/>
    <property type="match status" value="1"/>
</dbReference>
<protein>
    <recommendedName>
        <fullName evidence="1">Large ribosomal subunit protein uL1</fullName>
    </recommendedName>
    <alternativeName>
        <fullName>60S ribosomal protein L10a</fullName>
    </alternativeName>
</protein>
<comment type="similarity">
    <text evidence="1">Belongs to the universal ribosomal protein uL1 family.</text>
</comment>
<gene>
    <name type="primary">RPL10A</name>
</gene>
<keyword id="KW-0687">Ribonucleoprotein</keyword>
<keyword id="KW-0689">Ribosomal protein</keyword>
<name>RL10A_CHLRE</name>
<sequence length="213" mass="23856">MSKISNDVLRESVSALVEGAKTKPRKFQETVELQIGLKNYDPQKDKRFSGSVRLPFVPRPRMRVRAGDVKHCEQAGAIGVDAKGVEDLKKLNKNKKLVKKLAQAYHAFLASDSVIKQIPRLLGPGLNKAGKFPAPINKNLEEMVLDTKCSIKFQLKKVLCMGVAVANVGMTEGEIRTNIMYAINFLVSLLKKNWQNVRCLYIKSTMGKPIRIY</sequence>